<accession>B7GHP8</accession>
<sequence>MQQSKEERVHRVFEKISDHYDRMNSVISFKRHVAWRKDTMKRMNVQKGTKALDVCCGTADWTIALAEAVGPSGEVYGLDFSRNMLKVGEEKVKERGFQHVTLVHGNAMSLPFPDNTFDYVTIGFGLRNVPDYMTVLKEMYRVAKPGGKVVCLETSQPTLIGFRQLYYAYFRYIMPFFGKIFAKSYEEYSWLQESAREFPGMDELADMFRQAGFVNVQVKPYTFGVAAMHLGHKPDGR</sequence>
<gene>
    <name evidence="1" type="primary">menG</name>
    <name type="ordered locus">Aflv_1094</name>
</gene>
<reference key="1">
    <citation type="journal article" date="2008" name="Genome Biol.">
        <title>Encapsulated in silica: genome, proteome and physiology of the thermophilic bacterium Anoxybacillus flavithermus WK1.</title>
        <authorList>
            <person name="Saw J.H."/>
            <person name="Mountain B.W."/>
            <person name="Feng L."/>
            <person name="Omelchenko M.V."/>
            <person name="Hou S."/>
            <person name="Saito J.A."/>
            <person name="Stott M.B."/>
            <person name="Li D."/>
            <person name="Zhao G."/>
            <person name="Wu J."/>
            <person name="Galperin M.Y."/>
            <person name="Koonin E.V."/>
            <person name="Makarova K.S."/>
            <person name="Wolf Y.I."/>
            <person name="Rigden D.J."/>
            <person name="Dunfield P.F."/>
            <person name="Wang L."/>
            <person name="Alam M."/>
        </authorList>
    </citation>
    <scope>NUCLEOTIDE SEQUENCE [LARGE SCALE GENOMIC DNA]</scope>
    <source>
        <strain>DSM 21510 / WK1</strain>
    </source>
</reference>
<feature type="chain" id="PRO_1000187724" description="Demethylmenaquinone methyltransferase">
    <location>
        <begin position="1"/>
        <end position="237"/>
    </location>
</feature>
<feature type="binding site" evidence="1">
    <location>
        <position position="58"/>
    </location>
    <ligand>
        <name>S-adenosyl-L-methionine</name>
        <dbReference type="ChEBI" id="CHEBI:59789"/>
    </ligand>
</feature>
<feature type="binding site" evidence="1">
    <location>
        <position position="79"/>
    </location>
    <ligand>
        <name>S-adenosyl-L-methionine</name>
        <dbReference type="ChEBI" id="CHEBI:59789"/>
    </ligand>
</feature>
<feature type="binding site" evidence="1">
    <location>
        <begin position="106"/>
        <end position="107"/>
    </location>
    <ligand>
        <name>S-adenosyl-L-methionine</name>
        <dbReference type="ChEBI" id="CHEBI:59789"/>
    </ligand>
</feature>
<protein>
    <recommendedName>
        <fullName evidence="1">Demethylmenaquinone methyltransferase</fullName>
        <ecNumber evidence="1">2.1.1.163</ecNumber>
    </recommendedName>
</protein>
<comment type="function">
    <text evidence="1">Methyltransferase required for the conversion of demethylmenaquinol (DMKH2) to menaquinol (MKH2).</text>
</comment>
<comment type="catalytic activity">
    <reaction evidence="1">
        <text>a 2-demethylmenaquinol + S-adenosyl-L-methionine = a menaquinol + S-adenosyl-L-homocysteine + H(+)</text>
        <dbReference type="Rhea" id="RHEA:42640"/>
        <dbReference type="Rhea" id="RHEA-COMP:9539"/>
        <dbReference type="Rhea" id="RHEA-COMP:9563"/>
        <dbReference type="ChEBI" id="CHEBI:15378"/>
        <dbReference type="ChEBI" id="CHEBI:18151"/>
        <dbReference type="ChEBI" id="CHEBI:55437"/>
        <dbReference type="ChEBI" id="CHEBI:57856"/>
        <dbReference type="ChEBI" id="CHEBI:59789"/>
        <dbReference type="EC" id="2.1.1.163"/>
    </reaction>
</comment>
<comment type="pathway">
    <text evidence="1">Quinol/quinone metabolism; menaquinone biosynthesis; menaquinol from 1,4-dihydroxy-2-naphthoate: step 2/2.</text>
</comment>
<comment type="similarity">
    <text evidence="1">Belongs to the class I-like SAM-binding methyltransferase superfamily. MenG/UbiE family.</text>
</comment>
<organism>
    <name type="scientific">Anoxybacillus flavithermus (strain DSM 21510 / WK1)</name>
    <dbReference type="NCBI Taxonomy" id="491915"/>
    <lineage>
        <taxon>Bacteria</taxon>
        <taxon>Bacillati</taxon>
        <taxon>Bacillota</taxon>
        <taxon>Bacilli</taxon>
        <taxon>Bacillales</taxon>
        <taxon>Anoxybacillaceae</taxon>
        <taxon>Anoxybacillus</taxon>
    </lineage>
</organism>
<dbReference type="EC" id="2.1.1.163" evidence="1"/>
<dbReference type="EMBL" id="CP000922">
    <property type="protein sequence ID" value="ACJ33470.1"/>
    <property type="molecule type" value="Genomic_DNA"/>
</dbReference>
<dbReference type="RefSeq" id="WP_012574728.1">
    <property type="nucleotide sequence ID" value="NC_011567.1"/>
</dbReference>
<dbReference type="SMR" id="B7GHP8"/>
<dbReference type="STRING" id="491915.Aflv_1094"/>
<dbReference type="GeneID" id="7037351"/>
<dbReference type="KEGG" id="afl:Aflv_1094"/>
<dbReference type="PATRIC" id="fig|491915.6.peg.1117"/>
<dbReference type="eggNOG" id="COG2226">
    <property type="taxonomic scope" value="Bacteria"/>
</dbReference>
<dbReference type="HOGENOM" id="CLU_037990_0_0_9"/>
<dbReference type="UniPathway" id="UPA00079">
    <property type="reaction ID" value="UER00169"/>
</dbReference>
<dbReference type="Proteomes" id="UP000000742">
    <property type="component" value="Chromosome"/>
</dbReference>
<dbReference type="GO" id="GO:0043770">
    <property type="term" value="F:demethylmenaquinone methyltransferase activity"/>
    <property type="evidence" value="ECO:0007669"/>
    <property type="project" value="UniProtKB-UniRule"/>
</dbReference>
<dbReference type="GO" id="GO:0009234">
    <property type="term" value="P:menaquinone biosynthetic process"/>
    <property type="evidence" value="ECO:0007669"/>
    <property type="project" value="UniProtKB-UniRule"/>
</dbReference>
<dbReference type="GO" id="GO:0032259">
    <property type="term" value="P:methylation"/>
    <property type="evidence" value="ECO:0007669"/>
    <property type="project" value="UniProtKB-KW"/>
</dbReference>
<dbReference type="CDD" id="cd02440">
    <property type="entry name" value="AdoMet_MTases"/>
    <property type="match status" value="1"/>
</dbReference>
<dbReference type="FunFam" id="3.40.50.150:FF:000086">
    <property type="entry name" value="Demethylmenaquinone methyltransferase"/>
    <property type="match status" value="1"/>
</dbReference>
<dbReference type="Gene3D" id="3.40.50.150">
    <property type="entry name" value="Vaccinia Virus protein VP39"/>
    <property type="match status" value="1"/>
</dbReference>
<dbReference type="HAMAP" id="MF_01813">
    <property type="entry name" value="MenG_UbiE_methyltr"/>
    <property type="match status" value="1"/>
</dbReference>
<dbReference type="InterPro" id="IPR014122">
    <property type="entry name" value="MenG_heptapren"/>
</dbReference>
<dbReference type="InterPro" id="IPR029063">
    <property type="entry name" value="SAM-dependent_MTases_sf"/>
</dbReference>
<dbReference type="InterPro" id="IPR004033">
    <property type="entry name" value="UbiE/COQ5_MeTrFase"/>
</dbReference>
<dbReference type="InterPro" id="IPR023576">
    <property type="entry name" value="UbiE/COQ5_MeTrFase_CS"/>
</dbReference>
<dbReference type="NCBIfam" id="TIGR02752">
    <property type="entry name" value="MenG_heptapren"/>
    <property type="match status" value="1"/>
</dbReference>
<dbReference type="NCBIfam" id="TIGR01934">
    <property type="entry name" value="MenG_MenH_UbiE"/>
    <property type="match status" value="1"/>
</dbReference>
<dbReference type="NCBIfam" id="NF001243">
    <property type="entry name" value="PRK00216.1-4"/>
    <property type="match status" value="1"/>
</dbReference>
<dbReference type="NCBIfam" id="NF001244">
    <property type="entry name" value="PRK00216.1-5"/>
    <property type="match status" value="1"/>
</dbReference>
<dbReference type="PANTHER" id="PTHR43591:SF24">
    <property type="entry name" value="2-METHOXY-6-POLYPRENYL-1,4-BENZOQUINOL METHYLASE, MITOCHONDRIAL"/>
    <property type="match status" value="1"/>
</dbReference>
<dbReference type="PANTHER" id="PTHR43591">
    <property type="entry name" value="METHYLTRANSFERASE"/>
    <property type="match status" value="1"/>
</dbReference>
<dbReference type="Pfam" id="PF01209">
    <property type="entry name" value="Ubie_methyltran"/>
    <property type="match status" value="1"/>
</dbReference>
<dbReference type="SUPFAM" id="SSF53335">
    <property type="entry name" value="S-adenosyl-L-methionine-dependent methyltransferases"/>
    <property type="match status" value="1"/>
</dbReference>
<dbReference type="PROSITE" id="PS51608">
    <property type="entry name" value="SAM_MT_UBIE"/>
    <property type="match status" value="1"/>
</dbReference>
<dbReference type="PROSITE" id="PS01183">
    <property type="entry name" value="UBIE_1"/>
    <property type="match status" value="1"/>
</dbReference>
<proteinExistence type="inferred from homology"/>
<evidence type="ECO:0000255" key="1">
    <source>
        <dbReference type="HAMAP-Rule" id="MF_01813"/>
    </source>
</evidence>
<keyword id="KW-0474">Menaquinone biosynthesis</keyword>
<keyword id="KW-0489">Methyltransferase</keyword>
<keyword id="KW-0949">S-adenosyl-L-methionine</keyword>
<keyword id="KW-0808">Transferase</keyword>
<name>MENG_ANOFW</name>